<dbReference type="EMBL" id="AP006878">
    <property type="protein sequence ID" value="BAD85790.1"/>
    <property type="molecule type" value="Genomic_DNA"/>
</dbReference>
<dbReference type="RefSeq" id="WP_011250552.1">
    <property type="nucleotide sequence ID" value="NC_006624.1"/>
</dbReference>
<dbReference type="SMR" id="Q5JIR4"/>
<dbReference type="FunCoup" id="Q5JIR4">
    <property type="interactions" value="44"/>
</dbReference>
<dbReference type="STRING" id="69014.TK1601"/>
<dbReference type="EnsemblBacteria" id="BAD85790">
    <property type="protein sequence ID" value="BAD85790"/>
    <property type="gene ID" value="TK1601"/>
</dbReference>
<dbReference type="GeneID" id="78448129"/>
<dbReference type="KEGG" id="tko:TK1601"/>
<dbReference type="PATRIC" id="fig|69014.16.peg.1560"/>
<dbReference type="eggNOG" id="arCOG04102">
    <property type="taxonomic scope" value="Archaea"/>
</dbReference>
<dbReference type="HOGENOM" id="CLU_135754_2_0_2"/>
<dbReference type="InParanoid" id="Q5JIR4"/>
<dbReference type="OrthoDB" id="24971at2157"/>
<dbReference type="PhylomeDB" id="Q5JIR4"/>
<dbReference type="Proteomes" id="UP000000536">
    <property type="component" value="Chromosome"/>
</dbReference>
<dbReference type="GO" id="GO:0016020">
    <property type="term" value="C:membrane"/>
    <property type="evidence" value="ECO:0000318"/>
    <property type="project" value="GO_Central"/>
</dbReference>
<dbReference type="GO" id="GO:0005886">
    <property type="term" value="C:plasma membrane"/>
    <property type="evidence" value="ECO:0007669"/>
    <property type="project" value="UniProtKB-SubCell"/>
</dbReference>
<dbReference type="GO" id="GO:0005524">
    <property type="term" value="F:ATP binding"/>
    <property type="evidence" value="ECO:0007669"/>
    <property type="project" value="UniProtKB-UniRule"/>
</dbReference>
<dbReference type="GO" id="GO:0046933">
    <property type="term" value="F:proton-transporting ATP synthase activity, rotational mechanism"/>
    <property type="evidence" value="ECO:0007669"/>
    <property type="project" value="UniProtKB-UniRule"/>
</dbReference>
<dbReference type="GO" id="GO:0046961">
    <property type="term" value="F:proton-transporting ATPase activity, rotational mechanism"/>
    <property type="evidence" value="ECO:0007669"/>
    <property type="project" value="InterPro"/>
</dbReference>
<dbReference type="GO" id="GO:0042777">
    <property type="term" value="P:proton motive force-driven plasma membrane ATP synthesis"/>
    <property type="evidence" value="ECO:0007669"/>
    <property type="project" value="UniProtKB-UniRule"/>
</dbReference>
<dbReference type="Gene3D" id="3.40.50.10580">
    <property type="entry name" value="ATPase, V1 complex, subunit F"/>
    <property type="match status" value="1"/>
</dbReference>
<dbReference type="HAMAP" id="MF_00312">
    <property type="entry name" value="ATP_synth_F_arch"/>
    <property type="match status" value="1"/>
</dbReference>
<dbReference type="InterPro" id="IPR008218">
    <property type="entry name" value="ATPase_V1-cplx_f_g_su"/>
</dbReference>
<dbReference type="InterPro" id="IPR022944">
    <property type="entry name" value="ATPase_V1-cplx_fsu_bac/arc"/>
</dbReference>
<dbReference type="InterPro" id="IPR036906">
    <property type="entry name" value="ATPase_V1_fsu_sf"/>
</dbReference>
<dbReference type="NCBIfam" id="NF003047">
    <property type="entry name" value="PRK03957.1"/>
    <property type="match status" value="1"/>
</dbReference>
<dbReference type="PANTHER" id="PTHR13861:SF2">
    <property type="entry name" value="V-TYPE PROTON ATPASE SUBUNIT F"/>
    <property type="match status" value="1"/>
</dbReference>
<dbReference type="PANTHER" id="PTHR13861">
    <property type="entry name" value="VACUOLAR ATP SYNTHASE SUBUNIT F"/>
    <property type="match status" value="1"/>
</dbReference>
<dbReference type="Pfam" id="PF01990">
    <property type="entry name" value="ATP-synt_F"/>
    <property type="match status" value="1"/>
</dbReference>
<dbReference type="SUPFAM" id="SSF159468">
    <property type="entry name" value="AtpF-like"/>
    <property type="match status" value="1"/>
</dbReference>
<organism>
    <name type="scientific">Thermococcus kodakarensis (strain ATCC BAA-918 / JCM 12380 / KOD1)</name>
    <name type="common">Pyrococcus kodakaraensis (strain KOD1)</name>
    <dbReference type="NCBI Taxonomy" id="69014"/>
    <lineage>
        <taxon>Archaea</taxon>
        <taxon>Methanobacteriati</taxon>
        <taxon>Methanobacteriota</taxon>
        <taxon>Thermococci</taxon>
        <taxon>Thermococcales</taxon>
        <taxon>Thermococcaceae</taxon>
        <taxon>Thermococcus</taxon>
    </lineage>
</organism>
<protein>
    <recommendedName>
        <fullName evidence="1">A-type ATP synthase subunit F</fullName>
    </recommendedName>
</protein>
<evidence type="ECO:0000255" key="1">
    <source>
        <dbReference type="HAMAP-Rule" id="MF_00312"/>
    </source>
</evidence>
<proteinExistence type="inferred from homology"/>
<gene>
    <name evidence="1" type="primary">atpF</name>
    <name type="ordered locus">TK1601</name>
</gene>
<sequence length="102" mass="11443">MKIAVLGDSDTVLGFRLAGVHEAYAFEETPLDIERLKNKLNELIEREDVGIILITERLAEKVEIPDVKLPIILQVPDKSGSKLGEKALREIVRRAIGVELKR</sequence>
<feature type="chain" id="PRO_0000144824" description="A-type ATP synthase subunit F">
    <location>
        <begin position="1"/>
        <end position="102"/>
    </location>
</feature>
<keyword id="KW-0066">ATP synthesis</keyword>
<keyword id="KW-1003">Cell membrane</keyword>
<keyword id="KW-0375">Hydrogen ion transport</keyword>
<keyword id="KW-0406">Ion transport</keyword>
<keyword id="KW-0472">Membrane</keyword>
<keyword id="KW-1185">Reference proteome</keyword>
<keyword id="KW-0813">Transport</keyword>
<comment type="function">
    <text evidence="1">Component of the A-type ATP synthase that produces ATP from ADP in the presence of a proton gradient across the membrane.</text>
</comment>
<comment type="subunit">
    <text evidence="1">Has multiple subunits with at least A(3), B(3), C, D, E, F, H, I and proteolipid K(x).</text>
</comment>
<comment type="subcellular location">
    <subcellularLocation>
        <location evidence="1">Cell membrane</location>
        <topology evidence="1">Peripheral membrane protein</topology>
    </subcellularLocation>
</comment>
<comment type="similarity">
    <text evidence="1">Belongs to the V-ATPase F subunit family.</text>
</comment>
<name>AATF_THEKO</name>
<accession>Q5JIR4</accession>
<reference key="1">
    <citation type="journal article" date="2005" name="Genome Res.">
        <title>Complete genome sequence of the hyperthermophilic archaeon Thermococcus kodakaraensis KOD1 and comparison with Pyrococcus genomes.</title>
        <authorList>
            <person name="Fukui T."/>
            <person name="Atomi H."/>
            <person name="Kanai T."/>
            <person name="Matsumi R."/>
            <person name="Fujiwara S."/>
            <person name="Imanaka T."/>
        </authorList>
    </citation>
    <scope>NUCLEOTIDE SEQUENCE [LARGE SCALE GENOMIC DNA]</scope>
    <source>
        <strain>ATCC BAA-918 / JCM 12380 / KOD1</strain>
    </source>
</reference>